<protein>
    <recommendedName>
        <fullName evidence="1">Serine--tRNA ligase</fullName>
        <ecNumber evidence="1">6.1.1.11</ecNumber>
    </recommendedName>
    <alternativeName>
        <fullName evidence="1">Seryl-tRNA synthetase</fullName>
        <shortName evidence="1">SerRS</shortName>
    </alternativeName>
    <alternativeName>
        <fullName evidence="1">Seryl-tRNA(Ser/Sec) synthetase</fullName>
    </alternativeName>
</protein>
<reference key="1">
    <citation type="journal article" date="2007" name="Environ. Microbiol.">
        <title>Whole-genome analysis of the ammonia-oxidizing bacterium, Nitrosomonas eutropha C91: implications for niche adaptation.</title>
        <authorList>
            <person name="Stein L.Y."/>
            <person name="Arp D.J."/>
            <person name="Berube P.M."/>
            <person name="Chain P.S."/>
            <person name="Hauser L."/>
            <person name="Jetten M.S."/>
            <person name="Klotz M.G."/>
            <person name="Larimer F.W."/>
            <person name="Norton J.M."/>
            <person name="Op den Camp H.J.M."/>
            <person name="Shin M."/>
            <person name="Wei X."/>
        </authorList>
    </citation>
    <scope>NUCLEOTIDE SEQUENCE [LARGE SCALE GENOMIC DNA]</scope>
    <source>
        <strain>DSM 101675 / C91 / Nm57</strain>
    </source>
</reference>
<accession>Q0AJC4</accession>
<dbReference type="EC" id="6.1.1.11" evidence="1"/>
<dbReference type="EMBL" id="CP000450">
    <property type="protein sequence ID" value="ABI58547.1"/>
    <property type="molecule type" value="Genomic_DNA"/>
</dbReference>
<dbReference type="RefSeq" id="WP_011633391.1">
    <property type="nucleotide sequence ID" value="NC_008344.1"/>
</dbReference>
<dbReference type="SMR" id="Q0AJC4"/>
<dbReference type="STRING" id="335283.Neut_0263"/>
<dbReference type="KEGG" id="net:Neut_0263"/>
<dbReference type="eggNOG" id="COG0172">
    <property type="taxonomic scope" value="Bacteria"/>
</dbReference>
<dbReference type="HOGENOM" id="CLU_023797_1_1_4"/>
<dbReference type="OrthoDB" id="9804647at2"/>
<dbReference type="UniPathway" id="UPA00906">
    <property type="reaction ID" value="UER00895"/>
</dbReference>
<dbReference type="Proteomes" id="UP000001966">
    <property type="component" value="Chromosome"/>
</dbReference>
<dbReference type="GO" id="GO:0005737">
    <property type="term" value="C:cytoplasm"/>
    <property type="evidence" value="ECO:0007669"/>
    <property type="project" value="UniProtKB-SubCell"/>
</dbReference>
<dbReference type="GO" id="GO:0005524">
    <property type="term" value="F:ATP binding"/>
    <property type="evidence" value="ECO:0007669"/>
    <property type="project" value="UniProtKB-UniRule"/>
</dbReference>
<dbReference type="GO" id="GO:0004828">
    <property type="term" value="F:serine-tRNA ligase activity"/>
    <property type="evidence" value="ECO:0007669"/>
    <property type="project" value="UniProtKB-UniRule"/>
</dbReference>
<dbReference type="GO" id="GO:0016260">
    <property type="term" value="P:selenocysteine biosynthetic process"/>
    <property type="evidence" value="ECO:0007669"/>
    <property type="project" value="UniProtKB-UniRule"/>
</dbReference>
<dbReference type="GO" id="GO:0006434">
    <property type="term" value="P:seryl-tRNA aminoacylation"/>
    <property type="evidence" value="ECO:0007669"/>
    <property type="project" value="UniProtKB-UniRule"/>
</dbReference>
<dbReference type="CDD" id="cd00770">
    <property type="entry name" value="SerRS_core"/>
    <property type="match status" value="1"/>
</dbReference>
<dbReference type="Gene3D" id="3.30.930.10">
    <property type="entry name" value="Bira Bifunctional Protein, Domain 2"/>
    <property type="match status" value="1"/>
</dbReference>
<dbReference type="Gene3D" id="1.10.287.40">
    <property type="entry name" value="Serine-tRNA synthetase, tRNA binding domain"/>
    <property type="match status" value="1"/>
</dbReference>
<dbReference type="HAMAP" id="MF_00176">
    <property type="entry name" value="Ser_tRNA_synth_type1"/>
    <property type="match status" value="1"/>
</dbReference>
<dbReference type="InterPro" id="IPR002314">
    <property type="entry name" value="aa-tRNA-synt_IIb"/>
</dbReference>
<dbReference type="InterPro" id="IPR006195">
    <property type="entry name" value="aa-tRNA-synth_II"/>
</dbReference>
<dbReference type="InterPro" id="IPR045864">
    <property type="entry name" value="aa-tRNA-synth_II/BPL/LPL"/>
</dbReference>
<dbReference type="InterPro" id="IPR002317">
    <property type="entry name" value="Ser-tRNA-ligase_type_1"/>
</dbReference>
<dbReference type="InterPro" id="IPR015866">
    <property type="entry name" value="Ser-tRNA-synth_1_N"/>
</dbReference>
<dbReference type="InterPro" id="IPR042103">
    <property type="entry name" value="SerRS_1_N_sf"/>
</dbReference>
<dbReference type="InterPro" id="IPR033729">
    <property type="entry name" value="SerRS_core"/>
</dbReference>
<dbReference type="InterPro" id="IPR010978">
    <property type="entry name" value="tRNA-bd_arm"/>
</dbReference>
<dbReference type="NCBIfam" id="TIGR00414">
    <property type="entry name" value="serS"/>
    <property type="match status" value="1"/>
</dbReference>
<dbReference type="PANTHER" id="PTHR43697:SF1">
    <property type="entry name" value="SERINE--TRNA LIGASE"/>
    <property type="match status" value="1"/>
</dbReference>
<dbReference type="PANTHER" id="PTHR43697">
    <property type="entry name" value="SERYL-TRNA SYNTHETASE"/>
    <property type="match status" value="1"/>
</dbReference>
<dbReference type="Pfam" id="PF02403">
    <property type="entry name" value="Seryl_tRNA_N"/>
    <property type="match status" value="1"/>
</dbReference>
<dbReference type="Pfam" id="PF00587">
    <property type="entry name" value="tRNA-synt_2b"/>
    <property type="match status" value="1"/>
</dbReference>
<dbReference type="PIRSF" id="PIRSF001529">
    <property type="entry name" value="Ser-tRNA-synth_IIa"/>
    <property type="match status" value="1"/>
</dbReference>
<dbReference type="PRINTS" id="PR00981">
    <property type="entry name" value="TRNASYNTHSER"/>
</dbReference>
<dbReference type="SUPFAM" id="SSF55681">
    <property type="entry name" value="Class II aaRS and biotin synthetases"/>
    <property type="match status" value="1"/>
</dbReference>
<dbReference type="SUPFAM" id="SSF46589">
    <property type="entry name" value="tRNA-binding arm"/>
    <property type="match status" value="1"/>
</dbReference>
<dbReference type="PROSITE" id="PS50862">
    <property type="entry name" value="AA_TRNA_LIGASE_II"/>
    <property type="match status" value="1"/>
</dbReference>
<comment type="function">
    <text evidence="1">Catalyzes the attachment of serine to tRNA(Ser). Is also able to aminoacylate tRNA(Sec) with serine, to form the misacylated tRNA L-seryl-tRNA(Sec), which will be further converted into selenocysteinyl-tRNA(Sec).</text>
</comment>
<comment type="catalytic activity">
    <reaction evidence="1">
        <text>tRNA(Ser) + L-serine + ATP = L-seryl-tRNA(Ser) + AMP + diphosphate + H(+)</text>
        <dbReference type="Rhea" id="RHEA:12292"/>
        <dbReference type="Rhea" id="RHEA-COMP:9669"/>
        <dbReference type="Rhea" id="RHEA-COMP:9703"/>
        <dbReference type="ChEBI" id="CHEBI:15378"/>
        <dbReference type="ChEBI" id="CHEBI:30616"/>
        <dbReference type="ChEBI" id="CHEBI:33019"/>
        <dbReference type="ChEBI" id="CHEBI:33384"/>
        <dbReference type="ChEBI" id="CHEBI:78442"/>
        <dbReference type="ChEBI" id="CHEBI:78533"/>
        <dbReference type="ChEBI" id="CHEBI:456215"/>
        <dbReference type="EC" id="6.1.1.11"/>
    </reaction>
</comment>
<comment type="catalytic activity">
    <reaction evidence="1">
        <text>tRNA(Sec) + L-serine + ATP = L-seryl-tRNA(Sec) + AMP + diphosphate + H(+)</text>
        <dbReference type="Rhea" id="RHEA:42580"/>
        <dbReference type="Rhea" id="RHEA-COMP:9742"/>
        <dbReference type="Rhea" id="RHEA-COMP:10128"/>
        <dbReference type="ChEBI" id="CHEBI:15378"/>
        <dbReference type="ChEBI" id="CHEBI:30616"/>
        <dbReference type="ChEBI" id="CHEBI:33019"/>
        <dbReference type="ChEBI" id="CHEBI:33384"/>
        <dbReference type="ChEBI" id="CHEBI:78442"/>
        <dbReference type="ChEBI" id="CHEBI:78533"/>
        <dbReference type="ChEBI" id="CHEBI:456215"/>
        <dbReference type="EC" id="6.1.1.11"/>
    </reaction>
</comment>
<comment type="pathway">
    <text evidence="1">Aminoacyl-tRNA biosynthesis; selenocysteinyl-tRNA(Sec) biosynthesis; L-seryl-tRNA(Sec) from L-serine and tRNA(Sec): step 1/1.</text>
</comment>
<comment type="subunit">
    <text evidence="1">Homodimer. The tRNA molecule binds across the dimer.</text>
</comment>
<comment type="subcellular location">
    <subcellularLocation>
        <location evidence="1">Cytoplasm</location>
    </subcellularLocation>
</comment>
<comment type="domain">
    <text evidence="1">Consists of two distinct domains, a catalytic core and a N-terminal extension that is involved in tRNA binding.</text>
</comment>
<comment type="similarity">
    <text evidence="1">Belongs to the class-II aminoacyl-tRNA synthetase family. Type-1 seryl-tRNA synthetase subfamily.</text>
</comment>
<evidence type="ECO:0000255" key="1">
    <source>
        <dbReference type="HAMAP-Rule" id="MF_00176"/>
    </source>
</evidence>
<organism>
    <name type="scientific">Nitrosomonas eutropha (strain DSM 101675 / C91 / Nm57)</name>
    <dbReference type="NCBI Taxonomy" id="335283"/>
    <lineage>
        <taxon>Bacteria</taxon>
        <taxon>Pseudomonadati</taxon>
        <taxon>Pseudomonadota</taxon>
        <taxon>Betaproteobacteria</taxon>
        <taxon>Nitrosomonadales</taxon>
        <taxon>Nitrosomonadaceae</taxon>
        <taxon>Nitrosomonas</taxon>
    </lineage>
</organism>
<name>SYS_NITEC</name>
<keyword id="KW-0030">Aminoacyl-tRNA synthetase</keyword>
<keyword id="KW-0067">ATP-binding</keyword>
<keyword id="KW-0963">Cytoplasm</keyword>
<keyword id="KW-0436">Ligase</keyword>
<keyword id="KW-0547">Nucleotide-binding</keyword>
<keyword id="KW-0648">Protein biosynthesis</keyword>
<gene>
    <name evidence="1" type="primary">serS</name>
    <name type="ordered locus">Neut_0263</name>
</gene>
<sequence>MLDIQQLRSDLQNITTCLAQRGYNFPVSDFENLESQRKSIQTLTQTLQAKRNSASKQIGIAKQQGEDVSTIMAEIANMGDALKQAENQFESIQTKLQQLLMEIPNLPHNSVPTGKNADGNLEIRRWGTPKNFDFTVKDHVSIGEHLGLIDFETAAKLSGARFCLLKGGVARLHRALAQFMLDAHTQENGYNEVYVPYLVNADCLRGTGQLPKFEQDLFSVLTNAQDETDNVDKTGMVGLHLIPTAEVPLANIVRNTIVPLEQLPLKFVAHTPCFRSEAGSYGKDTRGLIRQHQFDKVELVQITHPEKSYEALESLVGHAEKILQKLELPYRIMLLCTGDMGFSAAKTYDIEVWLPAQQTYREISSCSNCEAFQARRMQARFRKGQDKPELLHTLNGSGLAVGRTLVAILENYQNEDGSVTIPEILQTYMGGIKRISL</sequence>
<feature type="chain" id="PRO_1000019747" description="Serine--tRNA ligase">
    <location>
        <begin position="1"/>
        <end position="437"/>
    </location>
</feature>
<feature type="binding site" evidence="1">
    <location>
        <begin position="244"/>
        <end position="246"/>
    </location>
    <ligand>
        <name>L-serine</name>
        <dbReference type="ChEBI" id="CHEBI:33384"/>
    </ligand>
</feature>
<feature type="binding site" evidence="1">
    <location>
        <begin position="275"/>
        <end position="277"/>
    </location>
    <ligand>
        <name>ATP</name>
        <dbReference type="ChEBI" id="CHEBI:30616"/>
    </ligand>
</feature>
<feature type="binding site" evidence="1">
    <location>
        <position position="298"/>
    </location>
    <ligand>
        <name>L-serine</name>
        <dbReference type="ChEBI" id="CHEBI:33384"/>
    </ligand>
</feature>
<feature type="binding site" evidence="1">
    <location>
        <begin position="362"/>
        <end position="365"/>
    </location>
    <ligand>
        <name>ATP</name>
        <dbReference type="ChEBI" id="CHEBI:30616"/>
    </ligand>
</feature>
<feature type="binding site" evidence="1">
    <location>
        <position position="397"/>
    </location>
    <ligand>
        <name>L-serine</name>
        <dbReference type="ChEBI" id="CHEBI:33384"/>
    </ligand>
</feature>
<proteinExistence type="inferred from homology"/>